<evidence type="ECO:0000255" key="1">
    <source>
        <dbReference type="HAMAP-Rule" id="MF_00500"/>
    </source>
</evidence>
<evidence type="ECO:0000256" key="2">
    <source>
        <dbReference type="SAM" id="MobiDB-lite"/>
    </source>
</evidence>
<evidence type="ECO:0000305" key="3"/>
<comment type="function">
    <text evidence="1">Binds directly to 16S ribosomal RNA.</text>
</comment>
<comment type="similarity">
    <text evidence="1">Belongs to the bacterial ribosomal protein bS20 family.</text>
</comment>
<reference key="1">
    <citation type="journal article" date="2009" name="Science">
        <title>The dynamics and time scale of ongoing genomic erosion in symbiotic bacteria.</title>
        <authorList>
            <person name="Moran N.A."/>
            <person name="McLaughlin H.J."/>
            <person name="Sorek R."/>
        </authorList>
    </citation>
    <scope>NUCLEOTIDE SEQUENCE [LARGE SCALE GENOMIC DNA]</scope>
    <source>
        <strain>5A</strain>
    </source>
</reference>
<gene>
    <name evidence="1" type="primary">rpsT</name>
    <name type="ordered locus">BUAP5A_149</name>
</gene>
<sequence length="89" mass="10142">MANIKASKKDALTSEKRRKKNSSRRSMIRTFVKKVRVAIMSGNKTTAEDAFKKMQPIIDSHVNKGLIHKNKAARYKSNLSLQIKKISKI</sequence>
<dbReference type="EMBL" id="CP001161">
    <property type="protein sequence ID" value="ACL30524.1"/>
    <property type="molecule type" value="Genomic_DNA"/>
</dbReference>
<dbReference type="RefSeq" id="WP_009874107.1">
    <property type="nucleotide sequence ID" value="NC_011833.1"/>
</dbReference>
<dbReference type="SMR" id="B8D8V2"/>
<dbReference type="KEGG" id="bap:BUAP5A_149"/>
<dbReference type="HOGENOM" id="CLU_160655_4_0_6"/>
<dbReference type="OrthoDB" id="9807974at2"/>
<dbReference type="Proteomes" id="UP000006904">
    <property type="component" value="Chromosome"/>
</dbReference>
<dbReference type="GO" id="GO:0005829">
    <property type="term" value="C:cytosol"/>
    <property type="evidence" value="ECO:0007669"/>
    <property type="project" value="TreeGrafter"/>
</dbReference>
<dbReference type="GO" id="GO:0015935">
    <property type="term" value="C:small ribosomal subunit"/>
    <property type="evidence" value="ECO:0007669"/>
    <property type="project" value="TreeGrafter"/>
</dbReference>
<dbReference type="GO" id="GO:0070181">
    <property type="term" value="F:small ribosomal subunit rRNA binding"/>
    <property type="evidence" value="ECO:0007669"/>
    <property type="project" value="TreeGrafter"/>
</dbReference>
<dbReference type="GO" id="GO:0003735">
    <property type="term" value="F:structural constituent of ribosome"/>
    <property type="evidence" value="ECO:0007669"/>
    <property type="project" value="InterPro"/>
</dbReference>
<dbReference type="GO" id="GO:0006412">
    <property type="term" value="P:translation"/>
    <property type="evidence" value="ECO:0007669"/>
    <property type="project" value="UniProtKB-UniRule"/>
</dbReference>
<dbReference type="FunFam" id="1.20.58.110:FF:000001">
    <property type="entry name" value="30S ribosomal protein S20"/>
    <property type="match status" value="1"/>
</dbReference>
<dbReference type="Gene3D" id="1.20.58.110">
    <property type="entry name" value="Ribosomal protein S20"/>
    <property type="match status" value="1"/>
</dbReference>
<dbReference type="HAMAP" id="MF_00500">
    <property type="entry name" value="Ribosomal_bS20"/>
    <property type="match status" value="1"/>
</dbReference>
<dbReference type="InterPro" id="IPR002583">
    <property type="entry name" value="Ribosomal_bS20"/>
</dbReference>
<dbReference type="InterPro" id="IPR036510">
    <property type="entry name" value="Ribosomal_bS20_sf"/>
</dbReference>
<dbReference type="NCBIfam" id="TIGR00029">
    <property type="entry name" value="S20"/>
    <property type="match status" value="1"/>
</dbReference>
<dbReference type="PANTHER" id="PTHR33398">
    <property type="entry name" value="30S RIBOSOMAL PROTEIN S20"/>
    <property type="match status" value="1"/>
</dbReference>
<dbReference type="PANTHER" id="PTHR33398:SF1">
    <property type="entry name" value="SMALL RIBOSOMAL SUBUNIT PROTEIN BS20C"/>
    <property type="match status" value="1"/>
</dbReference>
<dbReference type="Pfam" id="PF01649">
    <property type="entry name" value="Ribosomal_S20p"/>
    <property type="match status" value="1"/>
</dbReference>
<dbReference type="SUPFAM" id="SSF46992">
    <property type="entry name" value="Ribosomal protein S20"/>
    <property type="match status" value="1"/>
</dbReference>
<feature type="chain" id="PRO_1000194229" description="Small ribosomal subunit protein bS20">
    <location>
        <begin position="1"/>
        <end position="89"/>
    </location>
</feature>
<feature type="region of interest" description="Disordered" evidence="2">
    <location>
        <begin position="1"/>
        <end position="26"/>
    </location>
</feature>
<feature type="compositionally biased region" description="Basic residues" evidence="2">
    <location>
        <begin position="16"/>
        <end position="26"/>
    </location>
</feature>
<proteinExistence type="inferred from homology"/>
<protein>
    <recommendedName>
        <fullName evidence="1">Small ribosomal subunit protein bS20</fullName>
    </recommendedName>
    <alternativeName>
        <fullName evidence="3">30S ribosomal protein S20</fullName>
    </alternativeName>
</protein>
<keyword id="KW-0687">Ribonucleoprotein</keyword>
<keyword id="KW-0689">Ribosomal protein</keyword>
<keyword id="KW-0694">RNA-binding</keyword>
<keyword id="KW-0699">rRNA-binding</keyword>
<organism>
    <name type="scientific">Buchnera aphidicola subsp. Acyrthosiphon pisum (strain 5A)</name>
    <dbReference type="NCBI Taxonomy" id="563178"/>
    <lineage>
        <taxon>Bacteria</taxon>
        <taxon>Pseudomonadati</taxon>
        <taxon>Pseudomonadota</taxon>
        <taxon>Gammaproteobacteria</taxon>
        <taxon>Enterobacterales</taxon>
        <taxon>Erwiniaceae</taxon>
        <taxon>Buchnera</taxon>
    </lineage>
</organism>
<name>RS20_BUCA5</name>
<accession>B8D8V2</accession>